<evidence type="ECO:0000255" key="1">
    <source>
        <dbReference type="HAMAP-Rule" id="MF_01006"/>
    </source>
</evidence>
<accession>A1AV04</accession>
<feature type="chain" id="PRO_0000290742" description="Undecaprenyl-diphosphatase">
    <location>
        <begin position="1"/>
        <end position="273"/>
    </location>
</feature>
<feature type="transmembrane region" description="Helical" evidence="1">
    <location>
        <begin position="39"/>
        <end position="59"/>
    </location>
</feature>
<feature type="transmembrane region" description="Helical" evidence="1">
    <location>
        <begin position="86"/>
        <end position="106"/>
    </location>
</feature>
<feature type="transmembrane region" description="Helical" evidence="1">
    <location>
        <begin position="117"/>
        <end position="137"/>
    </location>
</feature>
<feature type="transmembrane region" description="Helical" evidence="1">
    <location>
        <begin position="146"/>
        <end position="166"/>
    </location>
</feature>
<feature type="transmembrane region" description="Helical" evidence="1">
    <location>
        <begin position="189"/>
        <end position="209"/>
    </location>
</feature>
<feature type="transmembrane region" description="Helical" evidence="1">
    <location>
        <begin position="220"/>
        <end position="240"/>
    </location>
</feature>
<feature type="transmembrane region" description="Helical" evidence="1">
    <location>
        <begin position="249"/>
        <end position="269"/>
    </location>
</feature>
<gene>
    <name evidence="1" type="primary">uppP</name>
    <name type="ordered locus">Ppro_3583</name>
</gene>
<proteinExistence type="inferred from homology"/>
<dbReference type="EC" id="3.6.1.27" evidence="1"/>
<dbReference type="EMBL" id="CP000482">
    <property type="protein sequence ID" value="ABL01175.1"/>
    <property type="molecule type" value="Genomic_DNA"/>
</dbReference>
<dbReference type="RefSeq" id="WP_011737388.1">
    <property type="nucleotide sequence ID" value="NC_008609.1"/>
</dbReference>
<dbReference type="SMR" id="A1AV04"/>
<dbReference type="STRING" id="338966.Ppro_3583"/>
<dbReference type="KEGG" id="ppd:Ppro_3583"/>
<dbReference type="eggNOG" id="COG1968">
    <property type="taxonomic scope" value="Bacteria"/>
</dbReference>
<dbReference type="HOGENOM" id="CLU_060296_1_0_7"/>
<dbReference type="OrthoDB" id="9808289at2"/>
<dbReference type="Proteomes" id="UP000006732">
    <property type="component" value="Chromosome"/>
</dbReference>
<dbReference type="GO" id="GO:0005886">
    <property type="term" value="C:plasma membrane"/>
    <property type="evidence" value="ECO:0007669"/>
    <property type="project" value="UniProtKB-SubCell"/>
</dbReference>
<dbReference type="GO" id="GO:0050380">
    <property type="term" value="F:undecaprenyl-diphosphatase activity"/>
    <property type="evidence" value="ECO:0007669"/>
    <property type="project" value="UniProtKB-UniRule"/>
</dbReference>
<dbReference type="GO" id="GO:0071555">
    <property type="term" value="P:cell wall organization"/>
    <property type="evidence" value="ECO:0007669"/>
    <property type="project" value="UniProtKB-KW"/>
</dbReference>
<dbReference type="GO" id="GO:0009252">
    <property type="term" value="P:peptidoglycan biosynthetic process"/>
    <property type="evidence" value="ECO:0007669"/>
    <property type="project" value="UniProtKB-KW"/>
</dbReference>
<dbReference type="GO" id="GO:0008360">
    <property type="term" value="P:regulation of cell shape"/>
    <property type="evidence" value="ECO:0007669"/>
    <property type="project" value="UniProtKB-KW"/>
</dbReference>
<dbReference type="GO" id="GO:0046677">
    <property type="term" value="P:response to antibiotic"/>
    <property type="evidence" value="ECO:0007669"/>
    <property type="project" value="UniProtKB-UniRule"/>
</dbReference>
<dbReference type="HAMAP" id="MF_01006">
    <property type="entry name" value="Undec_diphosphatase"/>
    <property type="match status" value="1"/>
</dbReference>
<dbReference type="InterPro" id="IPR003824">
    <property type="entry name" value="UppP"/>
</dbReference>
<dbReference type="NCBIfam" id="TIGR00753">
    <property type="entry name" value="undec_PP_bacA"/>
    <property type="match status" value="1"/>
</dbReference>
<dbReference type="PANTHER" id="PTHR30622">
    <property type="entry name" value="UNDECAPRENYL-DIPHOSPHATASE"/>
    <property type="match status" value="1"/>
</dbReference>
<dbReference type="PANTHER" id="PTHR30622:SF4">
    <property type="entry name" value="UNDECAPRENYL-DIPHOSPHATASE"/>
    <property type="match status" value="1"/>
</dbReference>
<dbReference type="Pfam" id="PF02673">
    <property type="entry name" value="BacA"/>
    <property type="match status" value="1"/>
</dbReference>
<organism>
    <name type="scientific">Pelobacter propionicus (strain DSM 2379 / NBRC 103807 / OttBd1)</name>
    <dbReference type="NCBI Taxonomy" id="338966"/>
    <lineage>
        <taxon>Bacteria</taxon>
        <taxon>Pseudomonadati</taxon>
        <taxon>Thermodesulfobacteriota</taxon>
        <taxon>Desulfuromonadia</taxon>
        <taxon>Desulfuromonadales</taxon>
        <taxon>Desulfuromonadaceae</taxon>
        <taxon>Pelobacter</taxon>
    </lineage>
</organism>
<keyword id="KW-0046">Antibiotic resistance</keyword>
<keyword id="KW-0997">Cell inner membrane</keyword>
<keyword id="KW-1003">Cell membrane</keyword>
<keyword id="KW-0133">Cell shape</keyword>
<keyword id="KW-0961">Cell wall biogenesis/degradation</keyword>
<keyword id="KW-0378">Hydrolase</keyword>
<keyword id="KW-0472">Membrane</keyword>
<keyword id="KW-0573">Peptidoglycan synthesis</keyword>
<keyword id="KW-1185">Reference proteome</keyword>
<keyword id="KW-0812">Transmembrane</keyword>
<keyword id="KW-1133">Transmembrane helix</keyword>
<protein>
    <recommendedName>
        <fullName evidence="1">Undecaprenyl-diphosphatase</fullName>
        <ecNumber evidence="1">3.6.1.27</ecNumber>
    </recommendedName>
    <alternativeName>
        <fullName evidence="1">Bacitracin resistance protein</fullName>
    </alternativeName>
    <alternativeName>
        <fullName evidence="1">Undecaprenyl pyrophosphate phosphatase</fullName>
    </alternativeName>
</protein>
<sequence length="273" mass="29122">MNLLHALILGALQGVTEVLPISSSAHLILVPWLLGWPESGLTFDVALHLGTFLALVVYFRRDIVDMAVSTIDAVKHRSLDTPARRLPFLVIASAVPAALVGKLFETQIEELFRSRPLLIGLFLILFGVGLGLADLFGRKRRFMAQVTVSHALVIGLFQCLALIPGVSRSGITITAGLMLGFNRVGAARFSFLMSLPIVAGAALFKMLHLLDQGIPAGEGLPLAAGIVSSAVTGYISVAFLLRFVQKRSIAPFVWYRLIAGGAVVSVILTGISG</sequence>
<name>UPPP_PELPD</name>
<comment type="function">
    <text evidence="1">Catalyzes the dephosphorylation of undecaprenyl diphosphate (UPP). Confers resistance to bacitracin.</text>
</comment>
<comment type="catalytic activity">
    <reaction evidence="1">
        <text>di-trans,octa-cis-undecaprenyl diphosphate + H2O = di-trans,octa-cis-undecaprenyl phosphate + phosphate + H(+)</text>
        <dbReference type="Rhea" id="RHEA:28094"/>
        <dbReference type="ChEBI" id="CHEBI:15377"/>
        <dbReference type="ChEBI" id="CHEBI:15378"/>
        <dbReference type="ChEBI" id="CHEBI:43474"/>
        <dbReference type="ChEBI" id="CHEBI:58405"/>
        <dbReference type="ChEBI" id="CHEBI:60392"/>
        <dbReference type="EC" id="3.6.1.27"/>
    </reaction>
</comment>
<comment type="subcellular location">
    <subcellularLocation>
        <location evidence="1">Cell inner membrane</location>
        <topology evidence="1">Multi-pass membrane protein</topology>
    </subcellularLocation>
</comment>
<comment type="miscellaneous">
    <text>Bacitracin is thought to be involved in the inhibition of peptidoglycan synthesis by sequestering undecaprenyl diphosphate, thereby reducing the pool of lipid carrier available.</text>
</comment>
<comment type="similarity">
    <text evidence="1">Belongs to the UppP family.</text>
</comment>
<reference key="1">
    <citation type="submission" date="2006-10" db="EMBL/GenBank/DDBJ databases">
        <title>Complete sequence of chromosome of Pelobacter propionicus DSM 2379.</title>
        <authorList>
            <consortium name="US DOE Joint Genome Institute"/>
            <person name="Copeland A."/>
            <person name="Lucas S."/>
            <person name="Lapidus A."/>
            <person name="Barry K."/>
            <person name="Detter J.C."/>
            <person name="Glavina del Rio T."/>
            <person name="Hammon N."/>
            <person name="Israni S."/>
            <person name="Dalin E."/>
            <person name="Tice H."/>
            <person name="Pitluck S."/>
            <person name="Saunders E."/>
            <person name="Brettin T."/>
            <person name="Bruce D."/>
            <person name="Han C."/>
            <person name="Tapia R."/>
            <person name="Schmutz J."/>
            <person name="Larimer F."/>
            <person name="Land M."/>
            <person name="Hauser L."/>
            <person name="Kyrpides N."/>
            <person name="Kim E."/>
            <person name="Lovley D."/>
            <person name="Richardson P."/>
        </authorList>
    </citation>
    <scope>NUCLEOTIDE SEQUENCE [LARGE SCALE GENOMIC DNA]</scope>
    <source>
        <strain>DSM 2379 / NBRC 103807 / OttBd1</strain>
    </source>
</reference>